<feature type="chain" id="PRO_0000136737" description="Tryptophan--tRNA ligase, cytoplasmic">
    <location>
        <begin position="1"/>
        <end position="476"/>
    </location>
</feature>
<feature type="chain" id="PRO_0000386459" description="T1-TrpRS" evidence="1">
    <location>
        <begin position="76"/>
        <end position="476"/>
    </location>
</feature>
<feature type="chain" id="PRO_0000386460" description="T2-TrpRS" evidence="1">
    <location>
        <begin position="99"/>
        <end position="476"/>
    </location>
</feature>
<feature type="domain" description="WHEP-TRS" evidence="4">
    <location>
        <begin position="13"/>
        <end position="69"/>
    </location>
</feature>
<feature type="region of interest" description="Dispensable to the catalytic activity">
    <location>
        <begin position="1"/>
        <end position="117"/>
    </location>
</feature>
<feature type="region of interest" description="Disordered" evidence="5">
    <location>
        <begin position="63"/>
        <end position="83"/>
    </location>
</feature>
<feature type="short sequence motif" description="'HIGH' region">
    <location>
        <begin position="169"/>
        <end position="178"/>
    </location>
</feature>
<feature type="short sequence motif" description="'KMSKS' region">
    <location>
        <begin position="354"/>
        <end position="358"/>
    </location>
</feature>
<feature type="modified residue" description="N6-succinyllysine" evidence="3">
    <location>
        <position position="159"/>
    </location>
</feature>
<feature type="modified residue" description="Phosphoserine" evidence="2">
    <location>
        <position position="356"/>
    </location>
</feature>
<feature type="sequence conflict" description="In Ref. 3; CAA36356." evidence="6" ref="3">
    <original>L</original>
    <variation>M</variation>
    <location>
        <position position="17"/>
    </location>
</feature>
<feature type="sequence conflict" description="In Ref. 1 and 3." evidence="6" ref="1 3">
    <original>IA</original>
    <variation>T</variation>
    <location>
        <begin position="228"/>
        <end position="229"/>
    </location>
</feature>
<feature type="sequence conflict" description="In Ref. 4; AA sequence." evidence="6" ref="4">
    <location>
        <position position="443"/>
    </location>
</feature>
<feature type="sequence conflict" description="In Ref. 4; AA sequence." evidence="6" ref="4">
    <original>QARRKEVTD</original>
    <variation>ESRKEVDM</variation>
    <location>
        <begin position="451"/>
        <end position="459"/>
    </location>
</feature>
<name>SYWC_BOVIN</name>
<keyword id="KW-0030">Aminoacyl-tRNA synthetase</keyword>
<keyword id="KW-0067">ATP-binding</keyword>
<keyword id="KW-0963">Cytoplasm</keyword>
<keyword id="KW-0903">Direct protein sequencing</keyword>
<keyword id="KW-0436">Ligase</keyword>
<keyword id="KW-0547">Nucleotide-binding</keyword>
<keyword id="KW-0597">Phosphoprotein</keyword>
<keyword id="KW-0648">Protein biosynthesis</keyword>
<keyword id="KW-1185">Reference proteome</keyword>
<comment type="function">
    <text evidence="2">T1-TrpRS has aminoacylation activity while T2-TrpRS lacks it. T1-TrpRS and T2-TrpRS possess angiostatic activity. T2-TrpRS inhibits fluid shear stress-activated responses of endothelial cells. Regulates ERK, Akt, and eNOS activation pathways that are associated with angiogenesis, cytoskeletal reorganization and shear stress-responsive gene expression (By similarity).</text>
</comment>
<comment type="catalytic activity">
    <reaction evidence="2">
        <text>tRNA(Trp) + L-tryptophan + ATP = L-tryptophyl-tRNA(Trp) + AMP + diphosphate + H(+)</text>
        <dbReference type="Rhea" id="RHEA:24080"/>
        <dbReference type="Rhea" id="RHEA-COMP:9671"/>
        <dbReference type="Rhea" id="RHEA-COMP:9705"/>
        <dbReference type="ChEBI" id="CHEBI:15378"/>
        <dbReference type="ChEBI" id="CHEBI:30616"/>
        <dbReference type="ChEBI" id="CHEBI:33019"/>
        <dbReference type="ChEBI" id="CHEBI:57912"/>
        <dbReference type="ChEBI" id="CHEBI:78442"/>
        <dbReference type="ChEBI" id="CHEBI:78535"/>
        <dbReference type="ChEBI" id="CHEBI:456215"/>
        <dbReference type="EC" id="6.1.1.2"/>
    </reaction>
</comment>
<comment type="subunit">
    <text evidence="2">Homodimer (By similarity). Interacts with oxidized form of GAPDH (By similarity).</text>
</comment>
<comment type="subcellular location">
    <subcellularLocation>
        <location>Cytoplasm</location>
    </subcellularLocation>
</comment>
<comment type="PTM">
    <text evidence="2">Proteolytic cleavage generates 2 forms; T1-TrpRS and T2-TrpRS.</text>
</comment>
<comment type="similarity">
    <text evidence="6">Belongs to the class-I aminoacyl-tRNA synthetase family.</text>
</comment>
<gene>
    <name type="primary">WARS1</name>
    <name type="synonym">WARS</name>
</gene>
<proteinExistence type="evidence at protein level"/>
<dbReference type="EC" id="6.1.1.2" evidence="2"/>
<dbReference type="EMBL" id="X53918">
    <property type="protein sequence ID" value="CAA37872.1"/>
    <property type="molecule type" value="mRNA"/>
</dbReference>
<dbReference type="EMBL" id="BC102806">
    <property type="protein sequence ID" value="AAI02807.1"/>
    <property type="molecule type" value="mRNA"/>
</dbReference>
<dbReference type="EMBL" id="X52113">
    <property type="protein sequence ID" value="CAA36356.1"/>
    <property type="molecule type" value="mRNA"/>
</dbReference>
<dbReference type="PIR" id="A40279">
    <property type="entry name" value="YWBO"/>
</dbReference>
<dbReference type="RefSeq" id="NP_776643.1">
    <property type="nucleotide sequence ID" value="NM_174218.1"/>
</dbReference>
<dbReference type="SMR" id="P17248"/>
<dbReference type="FunCoup" id="P17248">
    <property type="interactions" value="3943"/>
</dbReference>
<dbReference type="STRING" id="9913.ENSBTAP00000006139"/>
<dbReference type="PaxDb" id="9913-ENSBTAP00000006139"/>
<dbReference type="PeptideAtlas" id="P17248"/>
<dbReference type="Ensembl" id="ENSBTAT00000006139.4">
    <property type="protein sequence ID" value="ENSBTAP00000006139.2"/>
    <property type="gene ID" value="ENSBTAG00000004679.6"/>
</dbReference>
<dbReference type="GeneID" id="281576"/>
<dbReference type="KEGG" id="bta:281576"/>
<dbReference type="CTD" id="7453"/>
<dbReference type="VEuPathDB" id="HostDB:ENSBTAG00000004679"/>
<dbReference type="VGNC" id="VGNC:36863">
    <property type="gene designation" value="WARS1"/>
</dbReference>
<dbReference type="eggNOG" id="KOG2145">
    <property type="taxonomic scope" value="Eukaryota"/>
</dbReference>
<dbReference type="GeneTree" id="ENSGT00940000153724"/>
<dbReference type="HOGENOM" id="CLU_032621_0_1_1"/>
<dbReference type="InParanoid" id="P17248"/>
<dbReference type="OMA" id="SIYHRFM"/>
<dbReference type="OrthoDB" id="10261385at2759"/>
<dbReference type="TreeFam" id="TF105669"/>
<dbReference type="BRENDA" id="6.1.1.2">
    <property type="organism ID" value="908"/>
</dbReference>
<dbReference type="Proteomes" id="UP000009136">
    <property type="component" value="Chromosome 21"/>
</dbReference>
<dbReference type="Bgee" id="ENSBTAG00000004679">
    <property type="expression patterns" value="Expressed in corpus epididymis and 108 other cell types or tissues"/>
</dbReference>
<dbReference type="GO" id="GO:0005737">
    <property type="term" value="C:cytoplasm"/>
    <property type="evidence" value="ECO:0000318"/>
    <property type="project" value="GO_Central"/>
</dbReference>
<dbReference type="GO" id="GO:0005829">
    <property type="term" value="C:cytosol"/>
    <property type="evidence" value="ECO:0007669"/>
    <property type="project" value="Ensembl"/>
</dbReference>
<dbReference type="GO" id="GO:0005634">
    <property type="term" value="C:nucleus"/>
    <property type="evidence" value="ECO:0007669"/>
    <property type="project" value="Ensembl"/>
</dbReference>
<dbReference type="GO" id="GO:0032991">
    <property type="term" value="C:protein-containing complex"/>
    <property type="evidence" value="ECO:0007669"/>
    <property type="project" value="Ensembl"/>
</dbReference>
<dbReference type="GO" id="GO:0005524">
    <property type="term" value="F:ATP binding"/>
    <property type="evidence" value="ECO:0007669"/>
    <property type="project" value="UniProtKB-KW"/>
</dbReference>
<dbReference type="GO" id="GO:0019210">
    <property type="term" value="F:kinase inhibitor activity"/>
    <property type="evidence" value="ECO:0007669"/>
    <property type="project" value="Ensembl"/>
</dbReference>
<dbReference type="GO" id="GO:0019904">
    <property type="term" value="F:protein domain specific binding"/>
    <property type="evidence" value="ECO:0007669"/>
    <property type="project" value="Ensembl"/>
</dbReference>
<dbReference type="GO" id="GO:0042803">
    <property type="term" value="F:protein homodimerization activity"/>
    <property type="evidence" value="ECO:0000250"/>
    <property type="project" value="UniProtKB"/>
</dbReference>
<dbReference type="GO" id="GO:0019901">
    <property type="term" value="F:protein kinase binding"/>
    <property type="evidence" value="ECO:0007669"/>
    <property type="project" value="Ensembl"/>
</dbReference>
<dbReference type="GO" id="GO:0004830">
    <property type="term" value="F:tryptophan-tRNA ligase activity"/>
    <property type="evidence" value="ECO:0000250"/>
    <property type="project" value="UniProtKB"/>
</dbReference>
<dbReference type="GO" id="GO:0010628">
    <property type="term" value="P:positive regulation of gene expression"/>
    <property type="evidence" value="ECO:0007669"/>
    <property type="project" value="Ensembl"/>
</dbReference>
<dbReference type="GO" id="GO:0031334">
    <property type="term" value="P:positive regulation of protein-containing complex assembly"/>
    <property type="evidence" value="ECO:0007669"/>
    <property type="project" value="Ensembl"/>
</dbReference>
<dbReference type="GO" id="GO:0045765">
    <property type="term" value="P:regulation of angiogenesis"/>
    <property type="evidence" value="ECO:0007669"/>
    <property type="project" value="Ensembl"/>
</dbReference>
<dbReference type="GO" id="GO:0006436">
    <property type="term" value="P:tryptophanyl-tRNA aminoacylation"/>
    <property type="evidence" value="ECO:0000318"/>
    <property type="project" value="GO_Central"/>
</dbReference>
<dbReference type="CDD" id="cd00806">
    <property type="entry name" value="TrpRS_core"/>
    <property type="match status" value="1"/>
</dbReference>
<dbReference type="CDD" id="cd00936">
    <property type="entry name" value="WEPRS_RNA"/>
    <property type="match status" value="1"/>
</dbReference>
<dbReference type="FunFam" id="1.10.287.10:FF:000006">
    <property type="entry name" value="Bifunctional glutamate/proline--tRNA ligase"/>
    <property type="match status" value="1"/>
</dbReference>
<dbReference type="FunFam" id="1.10.240.10:FF:000003">
    <property type="entry name" value="Tryptophan--tRNA ligase, cytoplasmic"/>
    <property type="match status" value="1"/>
</dbReference>
<dbReference type="FunFam" id="3.40.50.620:FF:000454">
    <property type="entry name" value="Tryptophan--tRNA ligase, cytoplasmic"/>
    <property type="match status" value="1"/>
</dbReference>
<dbReference type="Gene3D" id="3.40.50.620">
    <property type="entry name" value="HUPs"/>
    <property type="match status" value="1"/>
</dbReference>
<dbReference type="Gene3D" id="1.10.287.10">
    <property type="entry name" value="S15/NS1, RNA-binding"/>
    <property type="match status" value="1"/>
</dbReference>
<dbReference type="Gene3D" id="1.10.240.10">
    <property type="entry name" value="Tyrosyl-Transfer RNA Synthetase"/>
    <property type="match status" value="1"/>
</dbReference>
<dbReference type="InterPro" id="IPR001412">
    <property type="entry name" value="aa-tRNA-synth_I_CS"/>
</dbReference>
<dbReference type="InterPro" id="IPR002305">
    <property type="entry name" value="aa-tRNA-synth_Ic"/>
</dbReference>
<dbReference type="InterPro" id="IPR014729">
    <property type="entry name" value="Rossmann-like_a/b/a_fold"/>
</dbReference>
<dbReference type="InterPro" id="IPR002306">
    <property type="entry name" value="Trp-tRNA-ligase"/>
</dbReference>
<dbReference type="InterPro" id="IPR009068">
    <property type="entry name" value="uS15_NS1_RNA-bd_sf"/>
</dbReference>
<dbReference type="InterPro" id="IPR000738">
    <property type="entry name" value="WHEP-TRS_dom"/>
</dbReference>
<dbReference type="NCBIfam" id="TIGR00233">
    <property type="entry name" value="trpS"/>
    <property type="match status" value="1"/>
</dbReference>
<dbReference type="PANTHER" id="PTHR10055:SF1">
    <property type="entry name" value="TRYPTOPHAN--TRNA LIGASE, CYTOPLASMIC"/>
    <property type="match status" value="1"/>
</dbReference>
<dbReference type="PANTHER" id="PTHR10055">
    <property type="entry name" value="TRYPTOPHANYL-TRNA SYNTHETASE"/>
    <property type="match status" value="1"/>
</dbReference>
<dbReference type="Pfam" id="PF00579">
    <property type="entry name" value="tRNA-synt_1b"/>
    <property type="match status" value="1"/>
</dbReference>
<dbReference type="Pfam" id="PF00458">
    <property type="entry name" value="WHEP-TRS"/>
    <property type="match status" value="1"/>
</dbReference>
<dbReference type="PRINTS" id="PR01039">
    <property type="entry name" value="TRNASYNTHTRP"/>
</dbReference>
<dbReference type="SMART" id="SM00991">
    <property type="entry name" value="WHEP-TRS"/>
    <property type="match status" value="1"/>
</dbReference>
<dbReference type="SUPFAM" id="SSF52374">
    <property type="entry name" value="Nucleotidylyl transferase"/>
    <property type="match status" value="1"/>
</dbReference>
<dbReference type="SUPFAM" id="SSF47060">
    <property type="entry name" value="S15/NS1 RNA-binding domain"/>
    <property type="match status" value="1"/>
</dbReference>
<dbReference type="PROSITE" id="PS00178">
    <property type="entry name" value="AA_TRNA_LIGASE_I"/>
    <property type="match status" value="1"/>
</dbReference>
<dbReference type="PROSITE" id="PS00762">
    <property type="entry name" value="WHEP_TRS_1"/>
    <property type="match status" value="1"/>
</dbReference>
<dbReference type="PROSITE" id="PS51185">
    <property type="entry name" value="WHEP_TRS_2"/>
    <property type="match status" value="1"/>
</dbReference>
<organism>
    <name type="scientific">Bos taurus</name>
    <name type="common">Bovine</name>
    <dbReference type="NCBI Taxonomy" id="9913"/>
    <lineage>
        <taxon>Eukaryota</taxon>
        <taxon>Metazoa</taxon>
        <taxon>Chordata</taxon>
        <taxon>Craniata</taxon>
        <taxon>Vertebrata</taxon>
        <taxon>Euteleostomi</taxon>
        <taxon>Mammalia</taxon>
        <taxon>Eutheria</taxon>
        <taxon>Laurasiatheria</taxon>
        <taxon>Artiodactyla</taxon>
        <taxon>Ruminantia</taxon>
        <taxon>Pecora</taxon>
        <taxon>Bovidae</taxon>
        <taxon>Bovinae</taxon>
        <taxon>Bos</taxon>
    </lineage>
</organism>
<reference key="1">
    <citation type="journal article" date="1991" name="Biochemistry">
        <title>A mammalian tryptophanyl-tRNA synthetase shows little homology to prokaryotic synthetases but near identity with mammalian peptide chain release factor.</title>
        <authorList>
            <person name="Garret M."/>
            <person name="Pajot B."/>
            <person name="Trezeguet V."/>
            <person name="Labouesse J."/>
            <person name="Merle M."/>
            <person name="Gandar J.-C."/>
            <person name="Benedetto J.-P."/>
            <person name="Sallafranque M.-L."/>
            <person name="Alterio J."/>
            <person name="Gueguen M."/>
            <person name="Sarger C."/>
            <person name="Labouesse B."/>
            <person name="Bonnet J."/>
        </authorList>
    </citation>
    <scope>NUCLEOTIDE SEQUENCE [MRNA]</scope>
    <scope>PARTIAL PROTEIN SEQUENCE</scope>
    <source>
        <tissue>Pancreas</tissue>
    </source>
</reference>
<reference key="2">
    <citation type="submission" date="2005-08" db="EMBL/GenBank/DDBJ databases">
        <authorList>
            <consortium name="NIH - Mammalian Gene Collection (MGC) project"/>
        </authorList>
    </citation>
    <scope>NUCLEOTIDE SEQUENCE [LARGE SCALE MRNA]</scope>
    <source>
        <strain>Crossbred X Angus</strain>
        <tissue>Ileum</tissue>
    </source>
</reference>
<reference key="3">
    <citation type="submission" date="1990-03" db="EMBL/GenBank/DDBJ databases">
        <authorList>
            <person name="Garret M."/>
            <person name="Trezeguet V."/>
            <person name="Pajot B."/>
            <person name="Gandar J.-C."/>
            <person name="Merle M."/>
            <person name="Guegueiv M."/>
            <person name="Benedetto J.-P."/>
            <person name="Sarger C."/>
            <person name="Alteriot J."/>
            <person name="la Bouessec B."/>
            <person name="Labouesse J."/>
            <person name="Bonnet J."/>
        </authorList>
    </citation>
    <scope>NUCLEOTIDE SEQUENCE [MRNA] OF 17-475</scope>
    <source>
        <tissue>Pancreas</tissue>
    </source>
</reference>
<reference key="4">
    <citation type="journal article" date="1989" name="Bioorg. Khim.">
        <title>Amino acid sequence of various peptides of tryptophanyl-tRNA-synthetase from bovine pancreas.</title>
        <authorList>
            <person name="Zargarova T.A."/>
            <person name="Kovaleva G.K."/>
            <person name="Favorova O.O."/>
            <person name="Levina N.B."/>
            <person name="Telezhinskaia I.N."/>
        </authorList>
    </citation>
    <scope>PROTEIN SEQUENCE OF 112-124; 337-354 AND 424-476</scope>
    <source>
        <tissue>Pancreas</tissue>
    </source>
</reference>
<sequence length="476" mass="53812">MADMSNGEQGCGSPLELFHSIAAQGELVRDLKARNAAKDEIDSAVKMLLSLKTSYKAATGEDYKVDCPPGDPAPESGEGLDATEADEDFVDPWTVQTSSAKGIDYDKLIVRFGSSKIDKELVNRIERATGQRPHRFLRRGIFFSHRDMHQILDAYENKKPFYLYTGRGPSSEAMHVGHLIPFIFTKWLQDVFNVPLVIQMTDDEKYLWKDLTLDQAYGYAVENAKDIIACGFDINKTFIFSDLDYMGMSPGFYKNVVKIQKHVTFNQVKGIFGFTDSDCIGKISFPAIQAAPSFSNSFPQIFRDRTDVQCLIPCAIDQDPYFRMTRDVAPRIGYPKPALLHSTFFPALQGAQTKMSASDPNSSIFLTDTAKQIKTKVNKHAFSGGRDTVEEHRQFGGNCDVDVSFMYLTFFLEDDDKLEQIRRDYTSGAMLTGELKKELIEVLQPLIAEHQARRKEVTDEIVKEFMTPRKLSYDFQ</sequence>
<evidence type="ECO:0000250" key="1"/>
<evidence type="ECO:0000250" key="2">
    <source>
        <dbReference type="UniProtKB" id="P23381"/>
    </source>
</evidence>
<evidence type="ECO:0000250" key="3">
    <source>
        <dbReference type="UniProtKB" id="P32921"/>
    </source>
</evidence>
<evidence type="ECO:0000255" key="4">
    <source>
        <dbReference type="PROSITE-ProRule" id="PRU00531"/>
    </source>
</evidence>
<evidence type="ECO:0000256" key="5">
    <source>
        <dbReference type="SAM" id="MobiDB-lite"/>
    </source>
</evidence>
<evidence type="ECO:0000305" key="6"/>
<accession>P17248</accession>
<accession>Q3SZK9</accession>
<protein>
    <recommendedName>
        <fullName>Tryptophan--tRNA ligase, cytoplasmic</fullName>
        <ecNumber evidence="2">6.1.1.2</ecNumber>
    </recommendedName>
    <alternativeName>
        <fullName>Tryptophanyl-tRNA synthetase</fullName>
        <shortName>TrpRS</shortName>
    </alternativeName>
    <component>
        <recommendedName>
            <fullName>T1-TrpRS</fullName>
        </recommendedName>
    </component>
    <component>
        <recommendedName>
            <fullName>T2-TrpRS</fullName>
        </recommendedName>
    </component>
</protein>